<sequence length="462" mass="50195">MSAEPHPLYRQLPAIDRLLNEPEMAPLLAEYGPVLLADTLRQLQAEAREYIGQFHTLADWCADWPAALRQRLNQRQPALKPVFNLTGTVLHTNLGRAPLAESAIAAVTDAMRSAVTLEYSLEGAGRGHRDRAVADLLCALTGAEDACIVNNNAAAVFLLLTVMAAGKQVVVSRGELVEIGGAFRIPDVMRQAGCDLVEVGTTNRTHLKDYRQAINENTGLLMKVHTSNYSIEGFTAAVSEQQLAALGQECSIPTATDLGSGSLVDMTRYGLPAEPMPQQLIAAGVDLVTFSGDKLLGGPQAGIILGKKQWIERLQQHPLKRALRADKMTLAALDATLRLYQQPDRLVEQLPSLRLLTRPASEIAACAQRLLAPLIACYGTDFTLDIESCWSQIGSGSLPVDRLPSWALTFTPKDGRGSTLEALTARWRTLTKPVIGRVADGRLWLDLRCLEDEAALLRELAS</sequence>
<accession>Q663U3</accession>
<proteinExistence type="inferred from homology"/>
<feature type="chain" id="PRO_1000050390" description="L-seryl-tRNA(Sec) selenium transferase">
    <location>
        <begin position="1"/>
        <end position="462"/>
    </location>
</feature>
<feature type="modified residue" description="N6-(pyridoxal phosphate)lysine" evidence="1">
    <location>
        <position position="294"/>
    </location>
</feature>
<comment type="function">
    <text evidence="1">Converts seryl-tRNA(Sec) to selenocysteinyl-tRNA(Sec) required for selenoprotein biosynthesis.</text>
</comment>
<comment type="catalytic activity">
    <reaction evidence="1">
        <text>L-seryl-tRNA(Sec) + selenophosphate + H(+) = L-selenocysteinyl-tRNA(Sec) + phosphate</text>
        <dbReference type="Rhea" id="RHEA:22728"/>
        <dbReference type="Rhea" id="RHEA-COMP:9742"/>
        <dbReference type="Rhea" id="RHEA-COMP:9743"/>
        <dbReference type="ChEBI" id="CHEBI:15378"/>
        <dbReference type="ChEBI" id="CHEBI:16144"/>
        <dbReference type="ChEBI" id="CHEBI:43474"/>
        <dbReference type="ChEBI" id="CHEBI:78533"/>
        <dbReference type="ChEBI" id="CHEBI:78573"/>
        <dbReference type="EC" id="2.9.1.1"/>
    </reaction>
</comment>
<comment type="cofactor">
    <cofactor evidence="1">
        <name>pyridoxal 5'-phosphate</name>
        <dbReference type="ChEBI" id="CHEBI:597326"/>
    </cofactor>
</comment>
<comment type="pathway">
    <text evidence="1">Aminoacyl-tRNA biosynthesis; selenocysteinyl-tRNA(Sec) biosynthesis; selenocysteinyl-tRNA(Sec) from L-seryl-tRNA(Sec) (bacterial route): step 1/1.</text>
</comment>
<comment type="subunit">
    <text evidence="1">Homodecamer; pentamer of dimers. Binds only one seryl-tRNA(Sec) per dimer.</text>
</comment>
<comment type="subcellular location">
    <subcellularLocation>
        <location evidence="1">Cytoplasm</location>
    </subcellularLocation>
</comment>
<comment type="similarity">
    <text evidence="1">Belongs to the SelA family.</text>
</comment>
<evidence type="ECO:0000255" key="1">
    <source>
        <dbReference type="HAMAP-Rule" id="MF_00423"/>
    </source>
</evidence>
<name>SELA_YERPS</name>
<dbReference type="EC" id="2.9.1.1" evidence="1"/>
<dbReference type="EMBL" id="BX936398">
    <property type="protein sequence ID" value="CAH23169.1"/>
    <property type="molecule type" value="Genomic_DNA"/>
</dbReference>
<dbReference type="RefSeq" id="WP_011193344.1">
    <property type="nucleotide sequence ID" value="NC_006155.1"/>
</dbReference>
<dbReference type="SMR" id="Q663U3"/>
<dbReference type="GeneID" id="49784097"/>
<dbReference type="KEGG" id="ypo:BZ17_2648"/>
<dbReference type="KEGG" id="yps:YPTB3931"/>
<dbReference type="PATRIC" id="fig|273123.14.peg.2775"/>
<dbReference type="UniPathway" id="UPA00906">
    <property type="reaction ID" value="UER00896"/>
</dbReference>
<dbReference type="Proteomes" id="UP000001011">
    <property type="component" value="Chromosome"/>
</dbReference>
<dbReference type="GO" id="GO:0005737">
    <property type="term" value="C:cytoplasm"/>
    <property type="evidence" value="ECO:0007669"/>
    <property type="project" value="UniProtKB-SubCell"/>
</dbReference>
<dbReference type="GO" id="GO:0004125">
    <property type="term" value="F:L-seryl-tRNA(Sec) selenium transferase activity"/>
    <property type="evidence" value="ECO:0007669"/>
    <property type="project" value="UniProtKB-UniRule"/>
</dbReference>
<dbReference type="GO" id="GO:0001717">
    <property type="term" value="P:conversion of seryl-tRNAsec to selenocys-tRNAsec"/>
    <property type="evidence" value="ECO:0007669"/>
    <property type="project" value="UniProtKB-UniRule"/>
</dbReference>
<dbReference type="GO" id="GO:0001514">
    <property type="term" value="P:selenocysteine incorporation"/>
    <property type="evidence" value="ECO:0007669"/>
    <property type="project" value="UniProtKB-UniRule"/>
</dbReference>
<dbReference type="FunFam" id="3.40.640.10:FF:000028">
    <property type="entry name" value="L-seryl-tRNA(Sec) selenium transferase"/>
    <property type="match status" value="1"/>
</dbReference>
<dbReference type="Gene3D" id="3.90.1150.180">
    <property type="match status" value="1"/>
</dbReference>
<dbReference type="Gene3D" id="3.40.640.10">
    <property type="entry name" value="Type I PLP-dependent aspartate aminotransferase-like (Major domain)"/>
    <property type="match status" value="1"/>
</dbReference>
<dbReference type="HAMAP" id="MF_00423">
    <property type="entry name" value="SelA"/>
    <property type="match status" value="1"/>
</dbReference>
<dbReference type="InterPro" id="IPR015424">
    <property type="entry name" value="PyrdxlP-dep_Trfase"/>
</dbReference>
<dbReference type="InterPro" id="IPR015421">
    <property type="entry name" value="PyrdxlP-dep_Trfase_major"/>
</dbReference>
<dbReference type="InterPro" id="IPR018319">
    <property type="entry name" value="SelA-like"/>
</dbReference>
<dbReference type="InterPro" id="IPR004534">
    <property type="entry name" value="SelA_trans"/>
</dbReference>
<dbReference type="InterPro" id="IPR025862">
    <property type="entry name" value="SelA_trans_N_dom"/>
</dbReference>
<dbReference type="NCBIfam" id="TIGR00474">
    <property type="entry name" value="selA"/>
    <property type="match status" value="1"/>
</dbReference>
<dbReference type="PANTHER" id="PTHR32328">
    <property type="entry name" value="L-SERYL-TRNA(SEC) SELENIUM TRANSFERASE"/>
    <property type="match status" value="1"/>
</dbReference>
<dbReference type="PANTHER" id="PTHR32328:SF0">
    <property type="entry name" value="L-SERYL-TRNA(SEC) SELENIUM TRANSFERASE"/>
    <property type="match status" value="1"/>
</dbReference>
<dbReference type="Pfam" id="PF12390">
    <property type="entry name" value="Se-cys_synth_N"/>
    <property type="match status" value="1"/>
</dbReference>
<dbReference type="Pfam" id="PF03841">
    <property type="entry name" value="SelA"/>
    <property type="match status" value="1"/>
</dbReference>
<dbReference type="SUPFAM" id="SSF53383">
    <property type="entry name" value="PLP-dependent transferases"/>
    <property type="match status" value="1"/>
</dbReference>
<keyword id="KW-0963">Cytoplasm</keyword>
<keyword id="KW-0648">Protein biosynthesis</keyword>
<keyword id="KW-0663">Pyridoxal phosphate</keyword>
<keyword id="KW-0711">Selenium</keyword>
<keyword id="KW-0808">Transferase</keyword>
<reference key="1">
    <citation type="journal article" date="2004" name="Proc. Natl. Acad. Sci. U.S.A.">
        <title>Insights into the evolution of Yersinia pestis through whole-genome comparison with Yersinia pseudotuberculosis.</title>
        <authorList>
            <person name="Chain P.S.G."/>
            <person name="Carniel E."/>
            <person name="Larimer F.W."/>
            <person name="Lamerdin J."/>
            <person name="Stoutland P.O."/>
            <person name="Regala W.M."/>
            <person name="Georgescu A.M."/>
            <person name="Vergez L.M."/>
            <person name="Land M.L."/>
            <person name="Motin V.L."/>
            <person name="Brubaker R.R."/>
            <person name="Fowler J."/>
            <person name="Hinnebusch J."/>
            <person name="Marceau M."/>
            <person name="Medigue C."/>
            <person name="Simonet M."/>
            <person name="Chenal-Francisque V."/>
            <person name="Souza B."/>
            <person name="Dacheux D."/>
            <person name="Elliott J.M."/>
            <person name="Derbise A."/>
            <person name="Hauser L.J."/>
            <person name="Garcia E."/>
        </authorList>
    </citation>
    <scope>NUCLEOTIDE SEQUENCE [LARGE SCALE GENOMIC DNA]</scope>
    <source>
        <strain>IP32953</strain>
    </source>
</reference>
<gene>
    <name evidence="1" type="primary">selA</name>
    <name type="ordered locus">YPTB3931</name>
</gene>
<protein>
    <recommendedName>
        <fullName evidence="1">L-seryl-tRNA(Sec) selenium transferase</fullName>
        <ecNumber evidence="1">2.9.1.1</ecNumber>
    </recommendedName>
    <alternativeName>
        <fullName evidence="1">Selenocysteine synthase</fullName>
        <shortName evidence="1">Sec synthase</shortName>
    </alternativeName>
    <alternativeName>
        <fullName evidence="1">Selenocysteinyl-tRNA(Sec) synthase</fullName>
    </alternativeName>
</protein>
<organism>
    <name type="scientific">Yersinia pseudotuberculosis serotype I (strain IP32953)</name>
    <dbReference type="NCBI Taxonomy" id="273123"/>
    <lineage>
        <taxon>Bacteria</taxon>
        <taxon>Pseudomonadati</taxon>
        <taxon>Pseudomonadota</taxon>
        <taxon>Gammaproteobacteria</taxon>
        <taxon>Enterobacterales</taxon>
        <taxon>Yersiniaceae</taxon>
        <taxon>Yersinia</taxon>
    </lineage>
</organism>